<proteinExistence type="evidence at protein level"/>
<protein>
    <recommendedName>
        <fullName evidence="5">Nuclear pore complex protein Nup58</fullName>
    </recommendedName>
    <alternativeName>
        <fullName evidence="4">Nucleoporin Nup58</fullName>
    </alternativeName>
</protein>
<evidence type="ECO:0000269" key="1">
    <source>
    </source>
</evidence>
<evidence type="ECO:0000269" key="2">
    <source>
    </source>
</evidence>
<evidence type="ECO:0000269" key="3">
    <source>
    </source>
</evidence>
<evidence type="ECO:0000305" key="4"/>
<evidence type="ECO:0000305" key="5">
    <source>
    </source>
</evidence>
<evidence type="ECO:0000312" key="6">
    <source>
        <dbReference type="FlyBase" id="FBgn0038722"/>
    </source>
</evidence>
<comment type="function">
    <text evidence="1 3">Component of the nuclear pore complex, a complex required for the trafficking across the nuclear membrane (PubMed:15086791). Together with Nup54, required for transposable element silencing regulation in ovarian follicle cells (PubMed:33856346). By interacting with the nuclear (Nxf1/Nxt1) and cytosolic (fs(1)Yb) components of the flamenco (flam) transcripts processing pathway, enables export and subsequent piRNA production (PubMed:33856346).</text>
</comment>
<comment type="subunit">
    <text evidence="1 3">Component of the nuclear pore complex (PubMed:15086791). Interacts with Nup54 (PubMed:33856346). Interacts (via C-terminus) with fs(1)Yb; this interaction occurs in a RNA-independent manner (PubMed:33856346). Interacts with sbr/nxf1 (PubMed:33856346). Interacts with Nxt1 (PubMed:33856346).</text>
</comment>
<comment type="subcellular location">
    <subcellularLocation>
        <location evidence="1">Nucleus</location>
        <location evidence="1">Nuclear pore complex</location>
    </subcellularLocation>
    <text evidence="1">Present also in annulate lamellae pore complexes (ALPCs).</text>
</comment>
<comment type="developmental stage">
    <text evidence="1 2">Expressed during embryonic development (at protein level).</text>
</comment>
<comment type="domain">
    <text evidence="4">Contains FG repeats. FG repeats are interaction sites for karyopherins (importins, exportins) and form probably an affinity gradient, guiding the transport proteins unidirectionally with their cargo through the NPC. FG repeat regions are highly flexible and lack ordered secondary structure. The overall conservation of FG repeats regarding exact sequence, spacing, and repeat unit length is limited.</text>
</comment>
<comment type="PTM">
    <text evidence="1 2">O-glycosylated; contains O-GlcNAc (PubMed:15086791, PubMed:24706800). O-GlcNAcylation increases with increasing ambient temperature (PubMed:24706800).</text>
</comment>
<comment type="similarity">
    <text evidence="4">Belongs to the NUP58 family.</text>
</comment>
<keyword id="KW-0325">Glycoprotein</keyword>
<keyword id="KW-0509">mRNA transport</keyword>
<keyword id="KW-0906">Nuclear pore complex</keyword>
<keyword id="KW-0539">Nucleus</keyword>
<keyword id="KW-0653">Protein transport</keyword>
<keyword id="KW-1185">Reference proteome</keyword>
<keyword id="KW-0677">Repeat</keyword>
<keyword id="KW-0811">Translocation</keyword>
<keyword id="KW-0813">Transport</keyword>
<dbReference type="EMBL" id="AE014297">
    <property type="protein sequence ID" value="AAF55687.1"/>
    <property type="molecule type" value="Genomic_DNA"/>
</dbReference>
<dbReference type="EMBL" id="AY071440">
    <property type="protein sequence ID" value="AAL49062.1"/>
    <property type="molecule type" value="mRNA"/>
</dbReference>
<dbReference type="RefSeq" id="NP_650821.2">
    <property type="nucleotide sequence ID" value="NM_142564.4"/>
</dbReference>
<dbReference type="SMR" id="Q9VDV3"/>
<dbReference type="BioGRID" id="67334">
    <property type="interactions" value="7"/>
</dbReference>
<dbReference type="ComplexPortal" id="CPX-2568">
    <property type="entry name" value="Nuclear pore complex"/>
</dbReference>
<dbReference type="FunCoup" id="Q9VDV3">
    <property type="interactions" value="879"/>
</dbReference>
<dbReference type="IntAct" id="Q9VDV3">
    <property type="interactions" value="2"/>
</dbReference>
<dbReference type="STRING" id="7227.FBpp0083195"/>
<dbReference type="GlyGen" id="Q9VDV3">
    <property type="glycosylation" value="14 sites, 1 O-linked glycan (6 sites)"/>
</dbReference>
<dbReference type="PaxDb" id="7227-FBpp0083195"/>
<dbReference type="EnsemblMetazoa" id="FBtr0083781">
    <property type="protein sequence ID" value="FBpp0083195"/>
    <property type="gene ID" value="FBgn0038722"/>
</dbReference>
<dbReference type="GeneID" id="42342"/>
<dbReference type="KEGG" id="dme:Dmel_CG7360"/>
<dbReference type="AGR" id="FB:FBgn0038722"/>
<dbReference type="CTD" id="9818"/>
<dbReference type="FlyBase" id="FBgn0038722">
    <property type="gene designation" value="Nup58"/>
</dbReference>
<dbReference type="VEuPathDB" id="VectorBase:FBgn0038722"/>
<dbReference type="eggNOG" id="KOG0845">
    <property type="taxonomic scope" value="Eukaryota"/>
</dbReference>
<dbReference type="GeneTree" id="ENSGT00730000111111"/>
<dbReference type="HOGENOM" id="CLU_034851_0_0_1"/>
<dbReference type="InParanoid" id="Q9VDV3"/>
<dbReference type="OMA" id="ALMNKSY"/>
<dbReference type="OrthoDB" id="2538017at2759"/>
<dbReference type="PhylomeDB" id="Q9VDV3"/>
<dbReference type="Reactome" id="R-DME-159227">
    <property type="pathway name" value="Transport of the SLBP independent Mature mRNA"/>
</dbReference>
<dbReference type="Reactome" id="R-DME-159230">
    <property type="pathway name" value="Transport of the SLBP Dependant Mature mRNA"/>
</dbReference>
<dbReference type="Reactome" id="R-DME-159231">
    <property type="pathway name" value="Transport of Mature mRNA Derived from an Intronless Transcript"/>
</dbReference>
<dbReference type="Reactome" id="R-DME-159236">
    <property type="pathway name" value="Transport of Mature mRNA derived from an Intron-Containing Transcript"/>
</dbReference>
<dbReference type="Reactome" id="R-DME-3108214">
    <property type="pathway name" value="SUMOylation of DNA damage response and repair proteins"/>
</dbReference>
<dbReference type="Reactome" id="R-DME-3301854">
    <property type="pathway name" value="Nuclear Pore Complex (NPC) Disassembly"/>
</dbReference>
<dbReference type="Reactome" id="R-DME-4085377">
    <property type="pathway name" value="SUMOylation of SUMOylation proteins"/>
</dbReference>
<dbReference type="Reactome" id="R-DME-4551638">
    <property type="pathway name" value="SUMOylation of chromatin organization proteins"/>
</dbReference>
<dbReference type="Reactome" id="R-DME-4615885">
    <property type="pathway name" value="SUMOylation of DNA replication proteins"/>
</dbReference>
<dbReference type="Reactome" id="R-DME-5578749">
    <property type="pathway name" value="Transcriptional regulation by small RNAs"/>
</dbReference>
<dbReference type="BioGRID-ORCS" id="42342">
    <property type="hits" value="0 hits in 1 CRISPR screen"/>
</dbReference>
<dbReference type="GenomeRNAi" id="42342"/>
<dbReference type="PRO" id="PR:Q9VDV3"/>
<dbReference type="Proteomes" id="UP000000803">
    <property type="component" value="Chromosome 3R"/>
</dbReference>
<dbReference type="Bgee" id="FBgn0038722">
    <property type="expression patterns" value="Expressed in egg cell and 62 other cell types or tissues"/>
</dbReference>
<dbReference type="GO" id="GO:0005635">
    <property type="term" value="C:nuclear envelope"/>
    <property type="evidence" value="ECO:0000314"/>
    <property type="project" value="UniProtKB"/>
</dbReference>
<dbReference type="GO" id="GO:0005643">
    <property type="term" value="C:nuclear pore"/>
    <property type="evidence" value="ECO:0000250"/>
    <property type="project" value="UniProtKB"/>
</dbReference>
<dbReference type="GO" id="GO:0008139">
    <property type="term" value="F:nuclear localization sequence binding"/>
    <property type="evidence" value="ECO:0000318"/>
    <property type="project" value="GO_Central"/>
</dbReference>
<dbReference type="GO" id="GO:0017056">
    <property type="term" value="F:structural constituent of nuclear pore"/>
    <property type="evidence" value="ECO:0000250"/>
    <property type="project" value="UniProtKB"/>
</dbReference>
<dbReference type="GO" id="GO:0051028">
    <property type="term" value="P:mRNA transport"/>
    <property type="evidence" value="ECO:0007669"/>
    <property type="project" value="UniProtKB-KW"/>
</dbReference>
<dbReference type="GO" id="GO:0006913">
    <property type="term" value="P:nucleocytoplasmic transport"/>
    <property type="evidence" value="ECO:0000250"/>
    <property type="project" value="UniProtKB"/>
</dbReference>
<dbReference type="GO" id="GO:0015031">
    <property type="term" value="P:protein transport"/>
    <property type="evidence" value="ECO:0007669"/>
    <property type="project" value="UniProtKB-KW"/>
</dbReference>
<dbReference type="Gene3D" id="6.10.140.1350">
    <property type="match status" value="1"/>
</dbReference>
<dbReference type="InterPro" id="IPR024882">
    <property type="entry name" value="NUP58/p45/49"/>
</dbReference>
<dbReference type="InterPro" id="IPR024945">
    <property type="entry name" value="Spt5_C_dom"/>
</dbReference>
<dbReference type="PANTHER" id="PTHR13437">
    <property type="entry name" value="NUCLEOPORIN P58/P45 NUCLEOPORIN-LIKE PROTEIN 1"/>
    <property type="match status" value="1"/>
</dbReference>
<dbReference type="PANTHER" id="PTHR13437:SF2">
    <property type="entry name" value="NUCLEOPORIN P58_P45"/>
    <property type="match status" value="1"/>
</dbReference>
<dbReference type="Pfam" id="PF15967">
    <property type="entry name" value="Nucleoporin_FG2"/>
    <property type="match status" value="1"/>
</dbReference>
<dbReference type="SMART" id="SM01104">
    <property type="entry name" value="CTD"/>
    <property type="match status" value="1"/>
</dbReference>
<organism>
    <name type="scientific">Drosophila melanogaster</name>
    <name type="common">Fruit fly</name>
    <dbReference type="NCBI Taxonomy" id="7227"/>
    <lineage>
        <taxon>Eukaryota</taxon>
        <taxon>Metazoa</taxon>
        <taxon>Ecdysozoa</taxon>
        <taxon>Arthropoda</taxon>
        <taxon>Hexapoda</taxon>
        <taxon>Insecta</taxon>
        <taxon>Pterygota</taxon>
        <taxon>Neoptera</taxon>
        <taxon>Endopterygota</taxon>
        <taxon>Diptera</taxon>
        <taxon>Brachycera</taxon>
        <taxon>Muscomorpha</taxon>
        <taxon>Ephydroidea</taxon>
        <taxon>Drosophilidae</taxon>
        <taxon>Drosophila</taxon>
        <taxon>Sophophora</taxon>
    </lineage>
</organism>
<name>NUP58_DROME</name>
<sequence length="546" mass="55528">MFTPTTNNAIGGATAATGAFAFGARPATTTAPPPSFGAATSTPTFGAAPATTSLFAAPAATPAFGAPAATPAFGAPASTPGFGATSTAAPAFGTAAATPAFGIPAATSAFGAPAATPAFGAAAATPAFGAPAATPAFGAPAATSAFGAPAATTAFGAPASTQASAFGAPAPAVGTVAPTFSFATPATSAPTTAPPAFGFGTTATTAAAAMPASLSSGIGSFSFPKPQATTAASLNFNTTTTTATAQPFNTGLKLGTTNATTTLGGGGIFSKPAGQAAAPAASTFVGLGGIDVTATQPKLGDNKQDGIKIKETQVPDEIIKTVDGLKAYIKQQKTISSDIGRTSTSKFTNVSHEITNLKWALQNMATLVEGSNQQIRLMRQETVKAIQSLEMAQRTQDTPAGLQFENNAPFQYFQCLVAKYEQDLIAFRQQIALTERHMHAISNPQSISPDDLKRGFRQLNESFISLAGRLHEVHQRVEEHKEHYLNLRRYRLRDTTNVFERIDNPPLPTVEPQRISSGPTPFSNISALMNKSYAAAASSASNATGN</sequence>
<gene>
    <name evidence="6" type="primary">Nup58</name>
    <name evidence="6" type="ORF">CG7360</name>
</gene>
<feature type="chain" id="PRO_0000204891" description="Nuclear pore complex protein Nup58">
    <location>
        <begin position="1"/>
        <end position="546"/>
    </location>
</feature>
<feature type="repeat" description="1">
    <location>
        <begin position="22"/>
        <end position="23"/>
    </location>
</feature>
<feature type="repeat" description="2">
    <location>
        <begin position="36"/>
        <end position="37"/>
    </location>
</feature>
<feature type="repeat" description="3">
    <location>
        <begin position="45"/>
        <end position="46"/>
    </location>
</feature>
<feature type="repeat" description="4">
    <location>
        <begin position="64"/>
        <end position="65"/>
    </location>
</feature>
<feature type="repeat" description="5">
    <location>
        <begin position="73"/>
        <end position="74"/>
    </location>
</feature>
<feature type="repeat" description="6">
    <location>
        <begin position="82"/>
        <end position="83"/>
    </location>
</feature>
<feature type="repeat" description="7">
    <location>
        <begin position="92"/>
        <end position="93"/>
    </location>
</feature>
<feature type="repeat" description="8">
    <location>
        <begin position="101"/>
        <end position="102"/>
    </location>
</feature>
<feature type="repeat" description="9">
    <location>
        <begin position="110"/>
        <end position="111"/>
    </location>
</feature>
<feature type="repeat" description="10">
    <location>
        <begin position="119"/>
        <end position="120"/>
    </location>
</feature>
<feature type="repeat" description="11">
    <location>
        <begin position="128"/>
        <end position="129"/>
    </location>
</feature>
<feature type="repeat" description="12">
    <location>
        <begin position="137"/>
        <end position="138"/>
    </location>
</feature>
<feature type="repeat" description="13">
    <location>
        <begin position="146"/>
        <end position="147"/>
    </location>
</feature>
<feature type="repeat" description="14">
    <location>
        <begin position="155"/>
        <end position="156"/>
    </location>
</feature>
<feature type="repeat" description="15">
    <location>
        <begin position="166"/>
        <end position="167"/>
    </location>
</feature>
<feature type="repeat" description="16">
    <location>
        <begin position="197"/>
        <end position="198"/>
    </location>
</feature>
<feature type="repeat" description="17">
    <location>
        <begin position="199"/>
        <end position="200"/>
    </location>
</feature>
<feature type="region of interest" description="17 X 2 AA repeats of F-G">
    <location>
        <begin position="22"/>
        <end position="200"/>
    </location>
</feature>
<feature type="sequence conflict" description="In Ref. 3; AAL49062." evidence="4" ref="3">
    <location>
        <position position="267"/>
    </location>
</feature>
<accession>Q9VDV3</accession>
<accession>Q8SYM7</accession>
<reference key="1">
    <citation type="journal article" date="2000" name="Science">
        <title>The genome sequence of Drosophila melanogaster.</title>
        <authorList>
            <person name="Adams M.D."/>
            <person name="Celniker S.E."/>
            <person name="Holt R.A."/>
            <person name="Evans C.A."/>
            <person name="Gocayne J.D."/>
            <person name="Amanatides P.G."/>
            <person name="Scherer S.E."/>
            <person name="Li P.W."/>
            <person name="Hoskins R.A."/>
            <person name="Galle R.F."/>
            <person name="George R.A."/>
            <person name="Lewis S.E."/>
            <person name="Richards S."/>
            <person name="Ashburner M."/>
            <person name="Henderson S.N."/>
            <person name="Sutton G.G."/>
            <person name="Wortman J.R."/>
            <person name="Yandell M.D."/>
            <person name="Zhang Q."/>
            <person name="Chen L.X."/>
            <person name="Brandon R.C."/>
            <person name="Rogers Y.-H.C."/>
            <person name="Blazej R.G."/>
            <person name="Champe M."/>
            <person name="Pfeiffer B.D."/>
            <person name="Wan K.H."/>
            <person name="Doyle C."/>
            <person name="Baxter E.G."/>
            <person name="Helt G."/>
            <person name="Nelson C.R."/>
            <person name="Miklos G.L.G."/>
            <person name="Abril J.F."/>
            <person name="Agbayani A."/>
            <person name="An H.-J."/>
            <person name="Andrews-Pfannkoch C."/>
            <person name="Baldwin D."/>
            <person name="Ballew R.M."/>
            <person name="Basu A."/>
            <person name="Baxendale J."/>
            <person name="Bayraktaroglu L."/>
            <person name="Beasley E.M."/>
            <person name="Beeson K.Y."/>
            <person name="Benos P.V."/>
            <person name="Berman B.P."/>
            <person name="Bhandari D."/>
            <person name="Bolshakov S."/>
            <person name="Borkova D."/>
            <person name="Botchan M.R."/>
            <person name="Bouck J."/>
            <person name="Brokstein P."/>
            <person name="Brottier P."/>
            <person name="Burtis K.C."/>
            <person name="Busam D.A."/>
            <person name="Butler H."/>
            <person name="Cadieu E."/>
            <person name="Center A."/>
            <person name="Chandra I."/>
            <person name="Cherry J.M."/>
            <person name="Cawley S."/>
            <person name="Dahlke C."/>
            <person name="Davenport L.B."/>
            <person name="Davies P."/>
            <person name="de Pablos B."/>
            <person name="Delcher A."/>
            <person name="Deng Z."/>
            <person name="Mays A.D."/>
            <person name="Dew I."/>
            <person name="Dietz S.M."/>
            <person name="Dodson K."/>
            <person name="Doup L.E."/>
            <person name="Downes M."/>
            <person name="Dugan-Rocha S."/>
            <person name="Dunkov B.C."/>
            <person name="Dunn P."/>
            <person name="Durbin K.J."/>
            <person name="Evangelista C.C."/>
            <person name="Ferraz C."/>
            <person name="Ferriera S."/>
            <person name="Fleischmann W."/>
            <person name="Fosler C."/>
            <person name="Gabrielian A.E."/>
            <person name="Garg N.S."/>
            <person name="Gelbart W.M."/>
            <person name="Glasser K."/>
            <person name="Glodek A."/>
            <person name="Gong F."/>
            <person name="Gorrell J.H."/>
            <person name="Gu Z."/>
            <person name="Guan P."/>
            <person name="Harris M."/>
            <person name="Harris N.L."/>
            <person name="Harvey D.A."/>
            <person name="Heiman T.J."/>
            <person name="Hernandez J.R."/>
            <person name="Houck J."/>
            <person name="Hostin D."/>
            <person name="Houston K.A."/>
            <person name="Howland T.J."/>
            <person name="Wei M.-H."/>
            <person name="Ibegwam C."/>
            <person name="Jalali M."/>
            <person name="Kalush F."/>
            <person name="Karpen G.H."/>
            <person name="Ke Z."/>
            <person name="Kennison J.A."/>
            <person name="Ketchum K.A."/>
            <person name="Kimmel B.E."/>
            <person name="Kodira C.D."/>
            <person name="Kraft C.L."/>
            <person name="Kravitz S."/>
            <person name="Kulp D."/>
            <person name="Lai Z."/>
            <person name="Lasko P."/>
            <person name="Lei Y."/>
            <person name="Levitsky A.A."/>
            <person name="Li J.H."/>
            <person name="Li Z."/>
            <person name="Liang Y."/>
            <person name="Lin X."/>
            <person name="Liu X."/>
            <person name="Mattei B."/>
            <person name="McIntosh T.C."/>
            <person name="McLeod M.P."/>
            <person name="McPherson D."/>
            <person name="Merkulov G."/>
            <person name="Milshina N.V."/>
            <person name="Mobarry C."/>
            <person name="Morris J."/>
            <person name="Moshrefi A."/>
            <person name="Mount S.M."/>
            <person name="Moy M."/>
            <person name="Murphy B."/>
            <person name="Murphy L."/>
            <person name="Muzny D.M."/>
            <person name="Nelson D.L."/>
            <person name="Nelson D.R."/>
            <person name="Nelson K.A."/>
            <person name="Nixon K."/>
            <person name="Nusskern D.R."/>
            <person name="Pacleb J.M."/>
            <person name="Palazzolo M."/>
            <person name="Pittman G.S."/>
            <person name="Pan S."/>
            <person name="Pollard J."/>
            <person name="Puri V."/>
            <person name="Reese M.G."/>
            <person name="Reinert K."/>
            <person name="Remington K."/>
            <person name="Saunders R.D.C."/>
            <person name="Scheeler F."/>
            <person name="Shen H."/>
            <person name="Shue B.C."/>
            <person name="Siden-Kiamos I."/>
            <person name="Simpson M."/>
            <person name="Skupski M.P."/>
            <person name="Smith T.J."/>
            <person name="Spier E."/>
            <person name="Spradling A.C."/>
            <person name="Stapleton M."/>
            <person name="Strong R."/>
            <person name="Sun E."/>
            <person name="Svirskas R."/>
            <person name="Tector C."/>
            <person name="Turner R."/>
            <person name="Venter E."/>
            <person name="Wang A.H."/>
            <person name="Wang X."/>
            <person name="Wang Z.-Y."/>
            <person name="Wassarman D.A."/>
            <person name="Weinstock G.M."/>
            <person name="Weissenbach J."/>
            <person name="Williams S.M."/>
            <person name="Woodage T."/>
            <person name="Worley K.C."/>
            <person name="Wu D."/>
            <person name="Yang S."/>
            <person name="Yao Q.A."/>
            <person name="Ye J."/>
            <person name="Yeh R.-F."/>
            <person name="Zaveri J.S."/>
            <person name="Zhan M."/>
            <person name="Zhang G."/>
            <person name="Zhao Q."/>
            <person name="Zheng L."/>
            <person name="Zheng X.H."/>
            <person name="Zhong F.N."/>
            <person name="Zhong W."/>
            <person name="Zhou X."/>
            <person name="Zhu S.C."/>
            <person name="Zhu X."/>
            <person name="Smith H.O."/>
            <person name="Gibbs R.A."/>
            <person name="Myers E.W."/>
            <person name="Rubin G.M."/>
            <person name="Venter J.C."/>
        </authorList>
    </citation>
    <scope>NUCLEOTIDE SEQUENCE [LARGE SCALE GENOMIC DNA]</scope>
    <source>
        <strain>Berkeley</strain>
    </source>
</reference>
<reference key="2">
    <citation type="journal article" date="2002" name="Genome Biol.">
        <title>Annotation of the Drosophila melanogaster euchromatic genome: a systematic review.</title>
        <authorList>
            <person name="Misra S."/>
            <person name="Crosby M.A."/>
            <person name="Mungall C.J."/>
            <person name="Matthews B.B."/>
            <person name="Campbell K.S."/>
            <person name="Hradecky P."/>
            <person name="Huang Y."/>
            <person name="Kaminker J.S."/>
            <person name="Millburn G.H."/>
            <person name="Prochnik S.E."/>
            <person name="Smith C.D."/>
            <person name="Tupy J.L."/>
            <person name="Whitfield E.J."/>
            <person name="Bayraktaroglu L."/>
            <person name="Berman B.P."/>
            <person name="Bettencourt B.R."/>
            <person name="Celniker S.E."/>
            <person name="de Grey A.D.N.J."/>
            <person name="Drysdale R.A."/>
            <person name="Harris N.L."/>
            <person name="Richter J."/>
            <person name="Russo S."/>
            <person name="Schroeder A.J."/>
            <person name="Shu S.Q."/>
            <person name="Stapleton M."/>
            <person name="Yamada C."/>
            <person name="Ashburner M."/>
            <person name="Gelbart W.M."/>
            <person name="Rubin G.M."/>
            <person name="Lewis S.E."/>
        </authorList>
    </citation>
    <scope>GENOME REANNOTATION</scope>
    <source>
        <strain>Berkeley</strain>
    </source>
</reference>
<reference key="3">
    <citation type="journal article" date="2002" name="Genome Biol.">
        <title>A Drosophila full-length cDNA resource.</title>
        <authorList>
            <person name="Stapleton M."/>
            <person name="Carlson J.W."/>
            <person name="Brokstein P."/>
            <person name="Yu C."/>
            <person name="Champe M."/>
            <person name="George R.A."/>
            <person name="Guarin H."/>
            <person name="Kronmiller B."/>
            <person name="Pacleb J.M."/>
            <person name="Park S."/>
            <person name="Wan K.H."/>
            <person name="Rubin G.M."/>
            <person name="Celniker S.E."/>
        </authorList>
    </citation>
    <scope>NUCLEOTIDE SEQUENCE [LARGE SCALE MRNA]</scope>
    <source>
        <strain>Berkeley</strain>
        <tissue>Embryo</tissue>
    </source>
</reference>
<reference key="4">
    <citation type="journal article" date="2004" name="Traffic">
        <title>Annulate lamellae play only a minor role in the storage of excess nucleoporins in Drosophila embryos.</title>
        <authorList>
            <person name="Onischenko E.A."/>
            <person name="Gubanova N.V."/>
            <person name="Kieselbach T."/>
            <person name="Kiseleva E.V."/>
            <person name="Hallberg E."/>
        </authorList>
    </citation>
    <scope>IDENTIFICATION BY MASS SPECTROMETRY</scope>
    <scope>FUNCTION</scope>
    <scope>IDENTIFICATION IN THE NUCLEAR PORE COMPLEX</scope>
    <scope>SUBCELLULAR LOCATION</scope>
    <scope>DEVELOPMENTAL STAGE</scope>
    <scope>GLYCOSYLATION</scope>
</reference>
<reference key="5">
    <citation type="journal article" date="2014" name="Proc. Natl. Acad. Sci. U.S.A.">
        <title>O-GlcNAc reports ambient temperature and confers heat resistance on ectotherm development.</title>
        <authorList>
            <person name="Radermacher P.T."/>
            <person name="Myachina F."/>
            <person name="Bosshardt F."/>
            <person name="Pandey R."/>
            <person name="Mariappa D."/>
            <person name="Mueller H.A."/>
            <person name="Lehner C.F."/>
        </authorList>
    </citation>
    <scope>DEVELOPMENTAL STAGE</scope>
    <scope>GLYCOSYLATION</scope>
</reference>
<reference key="6">
    <citation type="journal article" date="2021" name="Elife">
        <title>Channel Nuclear Pore Complex subunits are required for transposon silencing in Drosophila.</title>
        <authorList>
            <person name="Munafo M."/>
            <person name="Lawless V.R."/>
            <person name="Passera A."/>
            <person name="MacMillan S."/>
            <person name="Borneloev S."/>
            <person name="Haussmann I.U."/>
            <person name="Soller M."/>
            <person name="Hannon G.J."/>
            <person name="Czech B."/>
        </authorList>
    </citation>
    <scope>FUNCTION</scope>
    <scope>INTERACTION WITH NUP54; FS(1)YB; SBR AND NXT1</scope>
</reference>